<protein>
    <recommendedName>
        <fullName>Histone H2B.2</fullName>
    </recommendedName>
</protein>
<dbReference type="EMBL" id="CP000500">
    <property type="protein sequence ID" value="ABN67795.1"/>
    <property type="molecule type" value="Genomic_DNA"/>
</dbReference>
<dbReference type="RefSeq" id="XP_001385824.1">
    <property type="nucleotide sequence ID" value="XM_001385787.1"/>
</dbReference>
<dbReference type="SMR" id="A3LXE6"/>
<dbReference type="FunCoup" id="A3LXE6">
    <property type="interactions" value="1156"/>
</dbReference>
<dbReference type="STRING" id="322104.A3LXE6"/>
<dbReference type="GeneID" id="4839784"/>
<dbReference type="KEGG" id="pic:PICST_73488"/>
<dbReference type="eggNOG" id="KOG1744">
    <property type="taxonomic scope" value="Eukaryota"/>
</dbReference>
<dbReference type="HOGENOM" id="CLU_075666_1_3_1"/>
<dbReference type="InParanoid" id="A3LXE6"/>
<dbReference type="OMA" id="FCPFAIR"/>
<dbReference type="OrthoDB" id="10254238at2759"/>
<dbReference type="Proteomes" id="UP000002258">
    <property type="component" value="Chromosome 6"/>
</dbReference>
<dbReference type="GO" id="GO:0000786">
    <property type="term" value="C:nucleosome"/>
    <property type="evidence" value="ECO:0007669"/>
    <property type="project" value="UniProtKB-KW"/>
</dbReference>
<dbReference type="GO" id="GO:0005634">
    <property type="term" value="C:nucleus"/>
    <property type="evidence" value="ECO:0007669"/>
    <property type="project" value="UniProtKB-SubCell"/>
</dbReference>
<dbReference type="GO" id="GO:0003677">
    <property type="term" value="F:DNA binding"/>
    <property type="evidence" value="ECO:0007669"/>
    <property type="project" value="UniProtKB-KW"/>
</dbReference>
<dbReference type="GO" id="GO:0046982">
    <property type="term" value="F:protein heterodimerization activity"/>
    <property type="evidence" value="ECO:0007669"/>
    <property type="project" value="InterPro"/>
</dbReference>
<dbReference type="GO" id="GO:0030527">
    <property type="term" value="F:structural constituent of chromatin"/>
    <property type="evidence" value="ECO:0007669"/>
    <property type="project" value="InterPro"/>
</dbReference>
<dbReference type="CDD" id="cd22910">
    <property type="entry name" value="HFD_H2B"/>
    <property type="match status" value="1"/>
</dbReference>
<dbReference type="FunFam" id="1.10.20.10:FF:000014">
    <property type="entry name" value="Histone H2B"/>
    <property type="match status" value="1"/>
</dbReference>
<dbReference type="Gene3D" id="1.10.20.10">
    <property type="entry name" value="Histone, subunit A"/>
    <property type="match status" value="1"/>
</dbReference>
<dbReference type="InterPro" id="IPR009072">
    <property type="entry name" value="Histone-fold"/>
</dbReference>
<dbReference type="InterPro" id="IPR007125">
    <property type="entry name" value="Histone_H2A/H2B/H3"/>
</dbReference>
<dbReference type="InterPro" id="IPR000558">
    <property type="entry name" value="Histone_H2B"/>
</dbReference>
<dbReference type="InterPro" id="IPR055333">
    <property type="entry name" value="HISTONE_H2B_site"/>
</dbReference>
<dbReference type="PANTHER" id="PTHR23428">
    <property type="entry name" value="HISTONE H2B"/>
    <property type="match status" value="1"/>
</dbReference>
<dbReference type="Pfam" id="PF00125">
    <property type="entry name" value="Histone"/>
    <property type="match status" value="1"/>
</dbReference>
<dbReference type="PRINTS" id="PR00621">
    <property type="entry name" value="HISTONEH2B"/>
</dbReference>
<dbReference type="SMART" id="SM00427">
    <property type="entry name" value="H2B"/>
    <property type="match status" value="1"/>
</dbReference>
<dbReference type="SUPFAM" id="SSF47113">
    <property type="entry name" value="Histone-fold"/>
    <property type="match status" value="1"/>
</dbReference>
<dbReference type="PROSITE" id="PS00357">
    <property type="entry name" value="HISTONE_H2B"/>
    <property type="match status" value="1"/>
</dbReference>
<keyword id="KW-0007">Acetylation</keyword>
<keyword id="KW-0158">Chromosome</keyword>
<keyword id="KW-0238">DNA-binding</keyword>
<keyword id="KW-1017">Isopeptide bond</keyword>
<keyword id="KW-0544">Nucleosome core</keyword>
<keyword id="KW-0539">Nucleus</keyword>
<keyword id="KW-0597">Phosphoprotein</keyword>
<keyword id="KW-1185">Reference proteome</keyword>
<keyword id="KW-0832">Ubl conjugation</keyword>
<name>H2B2_PICST</name>
<accession>A3LXE6</accession>
<sequence length="131" mass="14260">MAPPKAEKKPASKAPAEKKPAAKKTASSTDAKKRTKTRKETYSSYIYKVLKQTHPDTGISQKAMSIMNSFVNDIFERIASEASKLAAYNKKSTISAREIQTAVRLILPGELAKHAVSEGTRAVTKYSSASN</sequence>
<comment type="function">
    <text>Core component of nucleosome. Nucleosomes wrap and compact DNA into chromatin, limiting DNA accessibility to the cellular machineries which require DNA as a template. Histones thereby play a central role in transcription regulation, DNA repair, DNA replication and chromosomal stability. DNA accessibility is regulated via a complex set of post-translational modifications of histones, also called histone code, and nucleosome remodeling.</text>
</comment>
<comment type="subunit">
    <text>The nucleosome is a histone octamer containing two molecules each of H2A, H2B, H3 and H4 assembled in one H3-H4 heterotetramer and two H2A-H2B heterodimers. The octamer wraps approximately 147 bp of DNA.</text>
</comment>
<comment type="subcellular location">
    <subcellularLocation>
        <location evidence="1">Nucleus</location>
    </subcellularLocation>
    <subcellularLocation>
        <location evidence="1">Chromosome</location>
    </subcellularLocation>
</comment>
<comment type="PTM">
    <text evidence="1">Monoubiquitinated to form H2BK123ub1. H2BK123ub1 gives a specific tag for epigenetic transcriptional activation and is also prerequisite for H3K4me and H3K79me formation. H2BK123ub1 also modulates the formation of double-strand breaks during meiosis and is a prerequisite for DNA-damage checkpoint activation (By similarity).</text>
</comment>
<comment type="PTM">
    <text evidence="1">Phosphorylated by STE20 to form H2BS10ph during progression through meiotic prophase. May be correlated with chromosome condensation (By similarity).</text>
</comment>
<comment type="PTM">
    <text evidence="1">Acetylated by GCN5 to form H2BK11ac and H2BK16ac. H2BK16ac can also be formed by ESA1. Acetylation of N-terminal lysines and particularly formation of H2BK11acK16ac has a positive effect on transcription (By similarity).</text>
</comment>
<comment type="PTM">
    <text evidence="1">Sumoylation to form H2BK6su or H2BK7su, and probably also H2BK16su or H2BK17su, occurs preferentially near the telomeres and represses gene transcription.</text>
</comment>
<comment type="similarity">
    <text evidence="3">Belongs to the histone H2B family.</text>
</comment>
<comment type="caution">
    <text evidence="3">To ensure consistency between histone entries, we follow the 'Brno' nomenclature for histone modifications, with positions referring to those used in the literature for the 'closest' model organism. Due to slight variations in histone sequences between organisms and to the presence of initiator methionine in UniProtKB/Swiss-Prot sequences, the actual positions of modified amino acids in the sequence generally differ. In this entry the following conventions are used: H2BK6ac = acetylated Lys-8; H2BK6su = sumoylated Lys-8; H2BK7ac = acetylated Lys-9; H2BK7su = sumoylated Lys-9; H2BS10ph = phosphorylated Ser-12; H2BK11ac = acetylated Lys-13; H2BK16ac = acetylated Lys-18; H2BK16su = sumoylated Lys-18; H2BK17su = sumoylated Lys-19; H2BK123ub1 = monoubiquitinated Lys-125.</text>
</comment>
<feature type="initiator methionine" description="Removed" evidence="1">
    <location>
        <position position="1"/>
    </location>
</feature>
<feature type="chain" id="PRO_0000297855" description="Histone H2B.2">
    <location>
        <begin position="2"/>
        <end position="131"/>
    </location>
</feature>
<feature type="region of interest" description="Disordered" evidence="2">
    <location>
        <begin position="1"/>
        <end position="39"/>
    </location>
</feature>
<feature type="compositionally biased region" description="Basic and acidic residues" evidence="2">
    <location>
        <begin position="1"/>
        <end position="20"/>
    </location>
</feature>
<feature type="modified residue" description="N6-acetyllysine; alternate" evidence="1">
    <location>
        <position position="8"/>
    </location>
</feature>
<feature type="modified residue" description="N6-acetyllysine; alternate" evidence="1">
    <location>
        <position position="9"/>
    </location>
</feature>
<feature type="modified residue" description="Phosphoserine" evidence="1">
    <location>
        <position position="12"/>
    </location>
</feature>
<feature type="modified residue" description="N6-acetyllysine" evidence="1">
    <location>
        <position position="13"/>
    </location>
</feature>
<feature type="modified residue" description="N6-acetyllysine; alternate" evidence="1">
    <location>
        <position position="18"/>
    </location>
</feature>
<feature type="cross-link" description="Glycyl lysine isopeptide (Lys-Gly) (interchain with G-Cter in SUMO); alternate" evidence="1">
    <location>
        <position position="8"/>
    </location>
</feature>
<feature type="cross-link" description="Glycyl lysine isopeptide (Lys-Gly) (interchain with G-Cter in SUMO); alternate" evidence="1">
    <location>
        <position position="9"/>
    </location>
</feature>
<feature type="cross-link" description="Glycyl lysine isopeptide (Lys-Gly) (interchain with G-Cter in SUMO); alternate" evidence="1">
    <location>
        <position position="18"/>
    </location>
</feature>
<feature type="cross-link" description="Glycyl lysine isopeptide (Lys-Gly) (interchain with G-Cter in SUMO)" evidence="1">
    <location>
        <position position="19"/>
    </location>
</feature>
<feature type="cross-link" description="Glycyl lysine isopeptide (Lys-Gly) (interchain with G-Cter in ubiquitin)" evidence="1">
    <location>
        <position position="125"/>
    </location>
</feature>
<gene>
    <name type="primary">HTB2</name>
    <name type="ORF">PICST_73488</name>
</gene>
<evidence type="ECO:0000250" key="1"/>
<evidence type="ECO:0000256" key="2">
    <source>
        <dbReference type="SAM" id="MobiDB-lite"/>
    </source>
</evidence>
<evidence type="ECO:0000305" key="3"/>
<reference key="1">
    <citation type="journal article" date="2007" name="Nat. Biotechnol.">
        <title>Genome sequence of the lignocellulose-bioconverting and xylose-fermenting yeast Pichia stipitis.</title>
        <authorList>
            <person name="Jeffries T.W."/>
            <person name="Grigoriev I.V."/>
            <person name="Grimwood J."/>
            <person name="Laplaza J.M."/>
            <person name="Aerts A."/>
            <person name="Salamov A."/>
            <person name="Schmutz J."/>
            <person name="Lindquist E."/>
            <person name="Dehal P."/>
            <person name="Shapiro H."/>
            <person name="Jin Y.-S."/>
            <person name="Passoth V."/>
            <person name="Richardson P.M."/>
        </authorList>
    </citation>
    <scope>NUCLEOTIDE SEQUENCE [LARGE SCALE GENOMIC DNA]</scope>
    <source>
        <strain>ATCC 58785 / CBS 6054 / NBRC 10063 / NRRL Y-11545</strain>
    </source>
</reference>
<proteinExistence type="inferred from homology"/>
<organism>
    <name type="scientific">Scheffersomyces stipitis (strain ATCC 58785 / CBS 6054 / NBRC 10063 / NRRL Y-11545)</name>
    <name type="common">Yeast</name>
    <name type="synonym">Pichia stipitis</name>
    <dbReference type="NCBI Taxonomy" id="322104"/>
    <lineage>
        <taxon>Eukaryota</taxon>
        <taxon>Fungi</taxon>
        <taxon>Dikarya</taxon>
        <taxon>Ascomycota</taxon>
        <taxon>Saccharomycotina</taxon>
        <taxon>Pichiomycetes</taxon>
        <taxon>Debaryomycetaceae</taxon>
        <taxon>Scheffersomyces</taxon>
    </lineage>
</organism>